<feature type="signal peptide" evidence="1">
    <location>
        <begin position="1"/>
        <end position="23"/>
    </location>
</feature>
<feature type="chain" id="PRO_0000446726" description="U-scoloptoxin(06)-Sm1a" evidence="3">
    <location>
        <begin position="24"/>
        <end position="96"/>
    </location>
</feature>
<comment type="subcellular location">
    <subcellularLocation>
        <location evidence="4">Secreted</location>
    </subcellularLocation>
</comment>
<comment type="tissue specificity">
    <text evidence="4">Expressed by the venom gland.</text>
</comment>
<comment type="PTM">
    <text evidence="3">Contains 2 disulfide bonds.</text>
</comment>
<comment type="similarity">
    <text evidence="3">Belongs to the scoloptoxin-06 family.</text>
</comment>
<comment type="caution">
    <text evidence="4">All S.morsitans family members described in 'Undeheim et al., 2014' have not been imported into UniProtKB. Please, refer to this paper to access them.</text>
</comment>
<comment type="online information" name="National Center for Biotechnology Information (NCBI)">
    <link uri="https://www.ncbi.nlm.nih.gov/nuccore/GASH01000180"/>
</comment>
<name>TX61A_SCOMO</name>
<protein>
    <recommendedName>
        <fullName evidence="2">U-scoloptoxin(06)-Sm1a</fullName>
        <shortName evidence="2">U-SLPTX(06)-Sm1a</shortName>
    </recommendedName>
</protein>
<sequence length="96" mass="11183">MNSFSFFLVIFVVLNLQVAKLMAFPASEDLSQDPRDMDQITNTVFDLRALQSALQKSQVNTKSRSKRLENDDDDDFDCDCDEEYDDEYIEEYCDCD</sequence>
<evidence type="ECO:0000255" key="1"/>
<evidence type="ECO:0000303" key="2">
    <source>
    </source>
</evidence>
<evidence type="ECO:0000305" key="3"/>
<evidence type="ECO:0000305" key="4">
    <source>
    </source>
</evidence>
<accession>P0DPY2</accession>
<keyword id="KW-1015">Disulfide bond</keyword>
<keyword id="KW-0964">Secreted</keyword>
<keyword id="KW-0732">Signal</keyword>
<keyword id="KW-0800">Toxin</keyword>
<organism>
    <name type="scientific">Scolopendra morsitans</name>
    <name type="common">Tanzanian blue ringleg centipede</name>
    <dbReference type="NCBI Taxonomy" id="943129"/>
    <lineage>
        <taxon>Eukaryota</taxon>
        <taxon>Metazoa</taxon>
        <taxon>Ecdysozoa</taxon>
        <taxon>Arthropoda</taxon>
        <taxon>Myriapoda</taxon>
        <taxon>Chilopoda</taxon>
        <taxon>Pleurostigmophora</taxon>
        <taxon>Scolopendromorpha</taxon>
        <taxon>Scolopendridae</taxon>
        <taxon>Scolopendra</taxon>
    </lineage>
</organism>
<reference key="1">
    <citation type="journal article" date="2014" name="Mol. Biol. Evol.">
        <title>Clawing through evolution: toxin diversification and convergence in the ancient lineage Chilopoda (centipedes).</title>
        <authorList>
            <person name="Undheim E.A."/>
            <person name="Jones A."/>
            <person name="Clauser K.R."/>
            <person name="Holland J.W."/>
            <person name="Pineda S.S."/>
            <person name="King G.F."/>
            <person name="Fry B.G."/>
        </authorList>
    </citation>
    <scope>NUCLEOTIDE SEQUENCE [MRNA]</scope>
    <scope>NOMENCLATURE</scope>
    <source>
        <tissue>Venom gland</tissue>
    </source>
</reference>
<dbReference type="SMR" id="P0DPY2"/>
<dbReference type="GO" id="GO:0005576">
    <property type="term" value="C:extracellular region"/>
    <property type="evidence" value="ECO:0007669"/>
    <property type="project" value="UniProtKB-SubCell"/>
</dbReference>
<dbReference type="GO" id="GO:0090729">
    <property type="term" value="F:toxin activity"/>
    <property type="evidence" value="ECO:0007669"/>
    <property type="project" value="UniProtKB-KW"/>
</dbReference>
<proteinExistence type="inferred from homology"/>